<proteinExistence type="inferred from homology"/>
<comment type="function">
    <text evidence="1">DNA ligase that catalyzes the formation of phosphodiester linkages between 5'-phosphoryl and 3'-hydroxyl groups in double-stranded DNA using NAD as a coenzyme and as the energy source for the reaction. It is essential for DNA replication and repair of damaged DNA.</text>
</comment>
<comment type="catalytic activity">
    <reaction evidence="1">
        <text>NAD(+) + (deoxyribonucleotide)n-3'-hydroxyl + 5'-phospho-(deoxyribonucleotide)m = (deoxyribonucleotide)n+m + AMP + beta-nicotinamide D-nucleotide.</text>
        <dbReference type="EC" id="6.5.1.2"/>
    </reaction>
</comment>
<comment type="cofactor">
    <cofactor evidence="1">
        <name>Mg(2+)</name>
        <dbReference type="ChEBI" id="CHEBI:18420"/>
    </cofactor>
    <cofactor evidence="1">
        <name>Mn(2+)</name>
        <dbReference type="ChEBI" id="CHEBI:29035"/>
    </cofactor>
</comment>
<comment type="similarity">
    <text evidence="1">Belongs to the NAD-dependent DNA ligase family. LigA subfamily.</text>
</comment>
<feature type="chain" id="PRO_0000313192" description="DNA ligase 1">
    <location>
        <begin position="1"/>
        <end position="663"/>
    </location>
</feature>
<feature type="domain" description="BRCT" evidence="1">
    <location>
        <begin position="583"/>
        <end position="663"/>
    </location>
</feature>
<feature type="active site" description="N6-AMP-lysine intermediate" evidence="1">
    <location>
        <position position="118"/>
    </location>
</feature>
<feature type="binding site" evidence="1">
    <location>
        <begin position="28"/>
        <end position="32"/>
    </location>
    <ligand>
        <name>NAD(+)</name>
        <dbReference type="ChEBI" id="CHEBI:57540"/>
    </ligand>
</feature>
<feature type="binding site" evidence="1">
    <location>
        <begin position="76"/>
        <end position="77"/>
    </location>
    <ligand>
        <name>NAD(+)</name>
        <dbReference type="ChEBI" id="CHEBI:57540"/>
    </ligand>
</feature>
<feature type="binding site" evidence="1">
    <location>
        <position position="139"/>
    </location>
    <ligand>
        <name>NAD(+)</name>
        <dbReference type="ChEBI" id="CHEBI:57540"/>
    </ligand>
</feature>
<feature type="binding site" evidence="1">
    <location>
        <position position="173"/>
    </location>
    <ligand>
        <name>NAD(+)</name>
        <dbReference type="ChEBI" id="CHEBI:57540"/>
    </ligand>
</feature>
<feature type="binding site" evidence="1">
    <location>
        <position position="310"/>
    </location>
    <ligand>
        <name>NAD(+)</name>
        <dbReference type="ChEBI" id="CHEBI:57540"/>
    </ligand>
</feature>
<feature type="binding site" evidence="1">
    <location>
        <position position="403"/>
    </location>
    <ligand>
        <name>Zn(2+)</name>
        <dbReference type="ChEBI" id="CHEBI:29105"/>
    </ligand>
</feature>
<feature type="binding site" evidence="1">
    <location>
        <position position="406"/>
    </location>
    <ligand>
        <name>Zn(2+)</name>
        <dbReference type="ChEBI" id="CHEBI:29105"/>
    </ligand>
</feature>
<feature type="binding site" evidence="1">
    <location>
        <position position="419"/>
    </location>
    <ligand>
        <name>Zn(2+)</name>
        <dbReference type="ChEBI" id="CHEBI:29105"/>
    </ligand>
</feature>
<feature type="binding site" evidence="1">
    <location>
        <position position="425"/>
    </location>
    <ligand>
        <name>Zn(2+)</name>
        <dbReference type="ChEBI" id="CHEBI:29105"/>
    </ligand>
</feature>
<gene>
    <name evidence="1" type="primary">ligA1</name>
    <name type="ordered locus">CA_C1195</name>
</gene>
<organism>
    <name type="scientific">Clostridium acetobutylicum (strain ATCC 824 / DSM 792 / JCM 1419 / IAM 19013 / LMG 5710 / NBRC 13948 / NRRL B-527 / VKM B-1787 / 2291 / W)</name>
    <dbReference type="NCBI Taxonomy" id="272562"/>
    <lineage>
        <taxon>Bacteria</taxon>
        <taxon>Bacillati</taxon>
        <taxon>Bacillota</taxon>
        <taxon>Clostridia</taxon>
        <taxon>Eubacteriales</taxon>
        <taxon>Clostridiaceae</taxon>
        <taxon>Clostridium</taxon>
    </lineage>
</organism>
<accession>Q97JS8</accession>
<dbReference type="EC" id="6.5.1.2" evidence="1"/>
<dbReference type="EMBL" id="AE001437">
    <property type="protein sequence ID" value="AAK79167.1"/>
    <property type="molecule type" value="Genomic_DNA"/>
</dbReference>
<dbReference type="PIR" id="D97047">
    <property type="entry name" value="D97047"/>
</dbReference>
<dbReference type="RefSeq" id="NP_347827.1">
    <property type="nucleotide sequence ID" value="NC_003030.1"/>
</dbReference>
<dbReference type="SMR" id="Q97JS8"/>
<dbReference type="STRING" id="272562.CA_C1195"/>
<dbReference type="KEGG" id="cac:CA_C1195"/>
<dbReference type="PATRIC" id="fig|272562.8.peg.1396"/>
<dbReference type="eggNOG" id="COG0272">
    <property type="taxonomic scope" value="Bacteria"/>
</dbReference>
<dbReference type="HOGENOM" id="CLU_007764_2_1_9"/>
<dbReference type="OrthoDB" id="9759736at2"/>
<dbReference type="Proteomes" id="UP000000814">
    <property type="component" value="Chromosome"/>
</dbReference>
<dbReference type="GO" id="GO:0005829">
    <property type="term" value="C:cytosol"/>
    <property type="evidence" value="ECO:0007669"/>
    <property type="project" value="TreeGrafter"/>
</dbReference>
<dbReference type="GO" id="GO:0003677">
    <property type="term" value="F:DNA binding"/>
    <property type="evidence" value="ECO:0007669"/>
    <property type="project" value="InterPro"/>
</dbReference>
<dbReference type="GO" id="GO:0003911">
    <property type="term" value="F:DNA ligase (NAD+) activity"/>
    <property type="evidence" value="ECO:0007669"/>
    <property type="project" value="UniProtKB-UniRule"/>
</dbReference>
<dbReference type="GO" id="GO:0046872">
    <property type="term" value="F:metal ion binding"/>
    <property type="evidence" value="ECO:0007669"/>
    <property type="project" value="UniProtKB-KW"/>
</dbReference>
<dbReference type="GO" id="GO:0006281">
    <property type="term" value="P:DNA repair"/>
    <property type="evidence" value="ECO:0007669"/>
    <property type="project" value="UniProtKB-KW"/>
</dbReference>
<dbReference type="GO" id="GO:0006260">
    <property type="term" value="P:DNA replication"/>
    <property type="evidence" value="ECO:0007669"/>
    <property type="project" value="UniProtKB-KW"/>
</dbReference>
<dbReference type="CDD" id="cd17748">
    <property type="entry name" value="BRCT_DNA_ligase_like"/>
    <property type="match status" value="1"/>
</dbReference>
<dbReference type="CDD" id="cd00114">
    <property type="entry name" value="LIGANc"/>
    <property type="match status" value="1"/>
</dbReference>
<dbReference type="FunFam" id="1.10.150.20:FF:000007">
    <property type="entry name" value="DNA ligase"/>
    <property type="match status" value="1"/>
</dbReference>
<dbReference type="FunFam" id="3.40.50.10190:FF:000054">
    <property type="entry name" value="DNA ligase"/>
    <property type="match status" value="1"/>
</dbReference>
<dbReference type="Gene3D" id="1.10.150.20">
    <property type="entry name" value="5' to 3' exonuclease, C-terminal subdomain"/>
    <property type="match status" value="2"/>
</dbReference>
<dbReference type="Gene3D" id="3.40.50.10190">
    <property type="entry name" value="BRCT domain"/>
    <property type="match status" value="1"/>
</dbReference>
<dbReference type="Gene3D" id="3.30.470.30">
    <property type="entry name" value="DNA ligase/mRNA capping enzyme"/>
    <property type="match status" value="1"/>
</dbReference>
<dbReference type="Gene3D" id="1.10.287.610">
    <property type="entry name" value="Helix hairpin bin"/>
    <property type="match status" value="1"/>
</dbReference>
<dbReference type="Gene3D" id="2.40.50.140">
    <property type="entry name" value="Nucleic acid-binding proteins"/>
    <property type="match status" value="1"/>
</dbReference>
<dbReference type="HAMAP" id="MF_01588">
    <property type="entry name" value="DNA_ligase_A"/>
    <property type="match status" value="1"/>
</dbReference>
<dbReference type="InterPro" id="IPR001357">
    <property type="entry name" value="BRCT_dom"/>
</dbReference>
<dbReference type="InterPro" id="IPR036420">
    <property type="entry name" value="BRCT_dom_sf"/>
</dbReference>
<dbReference type="InterPro" id="IPR041663">
    <property type="entry name" value="DisA/LigA_HHH"/>
</dbReference>
<dbReference type="InterPro" id="IPR001679">
    <property type="entry name" value="DNA_ligase"/>
</dbReference>
<dbReference type="InterPro" id="IPR033136">
    <property type="entry name" value="DNA_ligase_CS"/>
</dbReference>
<dbReference type="InterPro" id="IPR013839">
    <property type="entry name" value="DNAligase_adenylation"/>
</dbReference>
<dbReference type="InterPro" id="IPR013840">
    <property type="entry name" value="DNAligase_N"/>
</dbReference>
<dbReference type="InterPro" id="IPR003583">
    <property type="entry name" value="Hlx-hairpin-Hlx_DNA-bd_motif"/>
</dbReference>
<dbReference type="InterPro" id="IPR012340">
    <property type="entry name" value="NA-bd_OB-fold"/>
</dbReference>
<dbReference type="InterPro" id="IPR004150">
    <property type="entry name" value="NAD_DNA_ligase_OB"/>
</dbReference>
<dbReference type="InterPro" id="IPR010994">
    <property type="entry name" value="RuvA_2-like"/>
</dbReference>
<dbReference type="NCBIfam" id="TIGR00575">
    <property type="entry name" value="dnlj"/>
    <property type="match status" value="1"/>
</dbReference>
<dbReference type="NCBIfam" id="NF005932">
    <property type="entry name" value="PRK07956.1"/>
    <property type="match status" value="1"/>
</dbReference>
<dbReference type="PANTHER" id="PTHR23389">
    <property type="entry name" value="CHROMOSOME TRANSMISSION FIDELITY FACTOR 18"/>
    <property type="match status" value="1"/>
</dbReference>
<dbReference type="PANTHER" id="PTHR23389:SF9">
    <property type="entry name" value="DNA LIGASE"/>
    <property type="match status" value="1"/>
</dbReference>
<dbReference type="Pfam" id="PF00533">
    <property type="entry name" value="BRCT"/>
    <property type="match status" value="1"/>
</dbReference>
<dbReference type="Pfam" id="PF01653">
    <property type="entry name" value="DNA_ligase_aden"/>
    <property type="match status" value="1"/>
</dbReference>
<dbReference type="Pfam" id="PF03120">
    <property type="entry name" value="DNA_ligase_OB"/>
    <property type="match status" value="1"/>
</dbReference>
<dbReference type="Pfam" id="PF12826">
    <property type="entry name" value="HHH_2"/>
    <property type="match status" value="1"/>
</dbReference>
<dbReference type="Pfam" id="PF14520">
    <property type="entry name" value="HHH_5"/>
    <property type="match status" value="1"/>
</dbReference>
<dbReference type="PIRSF" id="PIRSF001604">
    <property type="entry name" value="LigA"/>
    <property type="match status" value="1"/>
</dbReference>
<dbReference type="SMART" id="SM00292">
    <property type="entry name" value="BRCT"/>
    <property type="match status" value="1"/>
</dbReference>
<dbReference type="SMART" id="SM00278">
    <property type="entry name" value="HhH1"/>
    <property type="match status" value="3"/>
</dbReference>
<dbReference type="SMART" id="SM00532">
    <property type="entry name" value="LIGANc"/>
    <property type="match status" value="1"/>
</dbReference>
<dbReference type="SUPFAM" id="SSF52113">
    <property type="entry name" value="BRCT domain"/>
    <property type="match status" value="1"/>
</dbReference>
<dbReference type="SUPFAM" id="SSF56091">
    <property type="entry name" value="DNA ligase/mRNA capping enzyme, catalytic domain"/>
    <property type="match status" value="1"/>
</dbReference>
<dbReference type="SUPFAM" id="SSF50249">
    <property type="entry name" value="Nucleic acid-binding proteins"/>
    <property type="match status" value="1"/>
</dbReference>
<dbReference type="SUPFAM" id="SSF47781">
    <property type="entry name" value="RuvA domain 2-like"/>
    <property type="match status" value="1"/>
</dbReference>
<dbReference type="PROSITE" id="PS50172">
    <property type="entry name" value="BRCT"/>
    <property type="match status" value="1"/>
</dbReference>
<dbReference type="PROSITE" id="PS01056">
    <property type="entry name" value="DNA_LIGASE_N2"/>
    <property type="match status" value="1"/>
</dbReference>
<sequence length="663" mass="75209">MKLIEDLIEKLNKYSYSYYVLDNPIVADKEYDIMYDELKRLEEETEYINPNSPTQRVGDIILDKFEKTHHKNKLWSLDKAQKKDEVKAFVNKCVKFVEQYNLTHSEKLPSPQFVVTQKLDGLTINCSYNESRLIKSATRGTGEIGEDITEQSKTILNLPNAINYSGEIDVHGEALMTKNALEQYNSNLKVNETPLKNLRNGAAGALRNLNIKETARRKLVAQFYDLSYTDKKLKKYSEILLFLKSQGFNITEYNICNNFDEINQAIDNIGEVRSSLQYDIDGVVIRLNDIETSRLMGYTIKCPKYAIAYKFKAKETTTKLIDVEWNVGRSGRINPTAILEPVELAGVIVKRATLNNMDDIKRKKIKKGARVFLRRSNDVIPEIMGVTEETEGETKEIEAPTICPYCGSEIVKEGVHLFCENTLSCKPQMVKSIVHFASRKAMNIEGFSEKTAEQLFEKLNIKSISDLYRITKEELMSLDKFKDKKASNLINAIEKSKECDLDSFVYSLGIPNVGKKTATDLCKQFKSFENIKKASYFELILVQDIGSIVAKSIVDFFKQEKIEKSLNELFKLGVKPSYEESEVSESVFNDKTVVATGSLQNYSRTEIKEKLESLGAKVAGSVSKKTDYVIAGENAGSKYDKAVALGVKILTEEKFEELIESVK</sequence>
<protein>
    <recommendedName>
        <fullName evidence="1">DNA ligase 1</fullName>
        <ecNumber evidence="1">6.5.1.2</ecNumber>
    </recommendedName>
    <alternativeName>
        <fullName evidence="1">Polydeoxyribonucleotide synthase [NAD(+)] 1</fullName>
    </alternativeName>
</protein>
<name>DNLJ1_CLOAB</name>
<reference key="1">
    <citation type="journal article" date="2001" name="J. Bacteriol.">
        <title>Genome sequence and comparative analysis of the solvent-producing bacterium Clostridium acetobutylicum.</title>
        <authorList>
            <person name="Noelling J."/>
            <person name="Breton G."/>
            <person name="Omelchenko M.V."/>
            <person name="Makarova K.S."/>
            <person name="Zeng Q."/>
            <person name="Gibson R."/>
            <person name="Lee H.M."/>
            <person name="Dubois J."/>
            <person name="Qiu D."/>
            <person name="Hitti J."/>
            <person name="Wolf Y.I."/>
            <person name="Tatusov R.L."/>
            <person name="Sabathe F."/>
            <person name="Doucette-Stamm L.A."/>
            <person name="Soucaille P."/>
            <person name="Daly M.J."/>
            <person name="Bennett G.N."/>
            <person name="Koonin E.V."/>
            <person name="Smith D.R."/>
        </authorList>
    </citation>
    <scope>NUCLEOTIDE SEQUENCE [LARGE SCALE GENOMIC DNA]</scope>
    <source>
        <strain>ATCC 824 / DSM 792 / JCM 1419 / IAM 19013 / LMG 5710 / NBRC 13948 / NRRL B-527 / VKM B-1787 / 2291 / W</strain>
    </source>
</reference>
<keyword id="KW-0227">DNA damage</keyword>
<keyword id="KW-0234">DNA repair</keyword>
<keyword id="KW-0235">DNA replication</keyword>
<keyword id="KW-0436">Ligase</keyword>
<keyword id="KW-0460">Magnesium</keyword>
<keyword id="KW-0464">Manganese</keyword>
<keyword id="KW-0479">Metal-binding</keyword>
<keyword id="KW-0520">NAD</keyword>
<keyword id="KW-1185">Reference proteome</keyword>
<keyword id="KW-0862">Zinc</keyword>
<evidence type="ECO:0000255" key="1">
    <source>
        <dbReference type="HAMAP-Rule" id="MF_01588"/>
    </source>
</evidence>